<dbReference type="EC" id="7.1.1.2"/>
<dbReference type="EMBL" id="AY484747">
    <property type="protein sequence ID" value="AAT98407.1"/>
    <property type="molecule type" value="Genomic_DNA"/>
</dbReference>
<dbReference type="PIR" id="S28749">
    <property type="entry name" value="S28749"/>
</dbReference>
<dbReference type="RefSeq" id="YP_073338.1">
    <property type="nucleotide sequence ID" value="NC_006161.1"/>
</dbReference>
<dbReference type="SMR" id="Q00860"/>
<dbReference type="GO" id="GO:0005743">
    <property type="term" value="C:mitochondrial inner membrane"/>
    <property type="evidence" value="ECO:0007669"/>
    <property type="project" value="UniProtKB-SubCell"/>
</dbReference>
<dbReference type="GO" id="GO:0008137">
    <property type="term" value="F:NADH dehydrogenase (ubiquinone) activity"/>
    <property type="evidence" value="ECO:0007669"/>
    <property type="project" value="UniProtKB-EC"/>
</dbReference>
<dbReference type="GO" id="GO:0009060">
    <property type="term" value="P:aerobic respiration"/>
    <property type="evidence" value="ECO:0007669"/>
    <property type="project" value="TreeGrafter"/>
</dbReference>
<dbReference type="HAMAP" id="MF_01350">
    <property type="entry name" value="NDH1_NuoH"/>
    <property type="match status" value="1"/>
</dbReference>
<dbReference type="InterPro" id="IPR001694">
    <property type="entry name" value="NADH_UbQ_OxRdtase_su1/FPO"/>
</dbReference>
<dbReference type="InterPro" id="IPR018086">
    <property type="entry name" value="NADH_UbQ_OxRdtase_su1_CS"/>
</dbReference>
<dbReference type="PANTHER" id="PTHR11432">
    <property type="entry name" value="NADH DEHYDROGENASE SUBUNIT 1"/>
    <property type="match status" value="1"/>
</dbReference>
<dbReference type="PANTHER" id="PTHR11432:SF3">
    <property type="entry name" value="NADH-UBIQUINONE OXIDOREDUCTASE CHAIN 1"/>
    <property type="match status" value="1"/>
</dbReference>
<dbReference type="Pfam" id="PF00146">
    <property type="entry name" value="NADHdh"/>
    <property type="match status" value="1"/>
</dbReference>
<dbReference type="PROSITE" id="PS00668">
    <property type="entry name" value="COMPLEX1_ND1_2"/>
    <property type="match status" value="1"/>
</dbReference>
<gene>
    <name type="primary">ND1</name>
</gene>
<geneLocation type="mitochondrion"/>
<proteinExistence type="inferred from homology"/>
<sequence length="305" mass="33764">MDWVAVIVSIIPFVGVLLAVGFYTLLERKILAIIMIRKGPSKVSYMGILQPFSDAGKLLCKEFIVPTRANVGPFILAPALMLAISLLGWLLYPYKSAEVFYVFGVILFMVITSVSVYGVMMSGWASNSKYSLLGAVRAMAQSISYEIPMGFIFFCVVLCSGVFMFQEISVFQQSLFFFFLPLCVVMLVWMLCMLAETNRAPFDFVEGESELVSGYNVEYSGGGFAVMFIAEYSSILLSSVMSAAMFFGGNEALVGFFMMVFAIFFVVVRASLPRLRYDKLMNLCWTVLLCVMLTASVCVVVLVGV</sequence>
<evidence type="ECO:0000250" key="1"/>
<evidence type="ECO:0000255" key="2"/>
<evidence type="ECO:0000305" key="3"/>
<feature type="chain" id="PRO_0000117434" description="NADH-ubiquinone oxidoreductase chain 1">
    <location>
        <begin position="1"/>
        <end position="305"/>
    </location>
</feature>
<feature type="transmembrane region" description="Helical" evidence="2">
    <location>
        <begin position="3"/>
        <end position="23"/>
    </location>
</feature>
<feature type="transmembrane region" description="Helical" evidence="2">
    <location>
        <begin position="71"/>
        <end position="91"/>
    </location>
</feature>
<feature type="transmembrane region" description="Helical" evidence="2">
    <location>
        <begin position="99"/>
        <end position="119"/>
    </location>
</feature>
<feature type="transmembrane region" description="Helical" evidence="2">
    <location>
        <begin position="145"/>
        <end position="165"/>
    </location>
</feature>
<feature type="transmembrane region" description="Helical" evidence="2">
    <location>
        <begin position="175"/>
        <end position="195"/>
    </location>
</feature>
<feature type="transmembrane region" description="Helical" evidence="2">
    <location>
        <begin position="221"/>
        <end position="241"/>
    </location>
</feature>
<feature type="transmembrane region" description="Helical" evidence="2">
    <location>
        <begin position="246"/>
        <end position="266"/>
    </location>
</feature>
<feature type="transmembrane region" description="Helical" evidence="2">
    <location>
        <begin position="285"/>
        <end position="305"/>
    </location>
</feature>
<name>NU1M_MYTED</name>
<comment type="function">
    <text evidence="1">Core subunit of the mitochondrial membrane respiratory chain NADH dehydrogenase (Complex I) that is believed to belong to the minimal assembly required for catalysis. Complex I functions in the transfer of electrons from NADH to the respiratory chain. The immediate electron acceptor for the enzyme is believed to be ubiquinone (By similarity).</text>
</comment>
<comment type="catalytic activity">
    <reaction>
        <text>a ubiquinone + NADH + 5 H(+)(in) = a ubiquinol + NAD(+) + 4 H(+)(out)</text>
        <dbReference type="Rhea" id="RHEA:29091"/>
        <dbReference type="Rhea" id="RHEA-COMP:9565"/>
        <dbReference type="Rhea" id="RHEA-COMP:9566"/>
        <dbReference type="ChEBI" id="CHEBI:15378"/>
        <dbReference type="ChEBI" id="CHEBI:16389"/>
        <dbReference type="ChEBI" id="CHEBI:17976"/>
        <dbReference type="ChEBI" id="CHEBI:57540"/>
        <dbReference type="ChEBI" id="CHEBI:57945"/>
        <dbReference type="EC" id="7.1.1.2"/>
    </reaction>
</comment>
<comment type="subcellular location">
    <subcellularLocation>
        <location evidence="1">Mitochondrion inner membrane</location>
        <topology evidence="1">Multi-pass membrane protein</topology>
    </subcellularLocation>
</comment>
<comment type="similarity">
    <text evidence="3">Belongs to the complex I subunit 1 family.</text>
</comment>
<keyword id="KW-0249">Electron transport</keyword>
<keyword id="KW-0472">Membrane</keyword>
<keyword id="KW-0496">Mitochondrion</keyword>
<keyword id="KW-0999">Mitochondrion inner membrane</keyword>
<keyword id="KW-0520">NAD</keyword>
<keyword id="KW-0679">Respiratory chain</keyword>
<keyword id="KW-1278">Translocase</keyword>
<keyword id="KW-0812">Transmembrane</keyword>
<keyword id="KW-1133">Transmembrane helix</keyword>
<keyword id="KW-0813">Transport</keyword>
<keyword id="KW-0830">Ubiquinone</keyword>
<protein>
    <recommendedName>
        <fullName>NADH-ubiquinone oxidoreductase chain 1</fullName>
        <ecNumber>7.1.1.2</ecNumber>
    </recommendedName>
    <alternativeName>
        <fullName>NADH dehydrogenase subunit 1</fullName>
    </alternativeName>
</protein>
<reference key="1">
    <citation type="journal article" date="2004" name="Mol. Biol. Evol.">
        <title>Complete sequences of the highly rearranged molluscan mitochondrial genomes of the scaphopod Graptacme eborea and the bivalve Mytilus edulis.</title>
        <authorList>
            <person name="Boore J.L."/>
            <person name="Medina M."/>
            <person name="Rosenberg L.A."/>
        </authorList>
    </citation>
    <scope>NUCLEOTIDE SEQUENCE [GENOMIC DNA]</scope>
    <scope>SEQUENCE REVISION</scope>
</reference>
<reference key="2">
    <citation type="journal article" date="1992" name="Genetics">
        <title>A novel mitochondrial genome organization for the blue mussel, Mytilus edulis.</title>
        <authorList>
            <person name="Hoffmann R.J."/>
            <person name="Boore J.L."/>
            <person name="Brown W.M."/>
        </authorList>
    </citation>
    <scope>NUCLEOTIDE SEQUENCE [GENOMIC DNA] OF 1-50 AND 134-305</scope>
</reference>
<accession>Q00860</accession>
<accession>Q68SR5</accession>
<organism>
    <name type="scientific">Mytilus edulis</name>
    <name type="common">Blue mussel</name>
    <dbReference type="NCBI Taxonomy" id="6550"/>
    <lineage>
        <taxon>Eukaryota</taxon>
        <taxon>Metazoa</taxon>
        <taxon>Spiralia</taxon>
        <taxon>Lophotrochozoa</taxon>
        <taxon>Mollusca</taxon>
        <taxon>Bivalvia</taxon>
        <taxon>Autobranchia</taxon>
        <taxon>Pteriomorphia</taxon>
        <taxon>Mytilida</taxon>
        <taxon>Mytiloidea</taxon>
        <taxon>Mytilidae</taxon>
        <taxon>Mytilinae</taxon>
        <taxon>Mytilus</taxon>
    </lineage>
</organism>